<feature type="chain" id="PRO_1000143192" description="Small ribosomal subunit protein uS15">
    <location>
        <begin position="1"/>
        <end position="86"/>
    </location>
</feature>
<feature type="region of interest" description="Disordered" evidence="2">
    <location>
        <begin position="1"/>
        <end position="22"/>
    </location>
</feature>
<feature type="compositionally biased region" description="Basic and acidic residues" evidence="2">
    <location>
        <begin position="7"/>
        <end position="16"/>
    </location>
</feature>
<sequence length="86" mass="10040">MSVDTQKVIEDNKRSAQDTGSPEVQVALLTARIELLTGHFKTHKKDHHSRRGLLQMVNRRRSLLDYLKKKDGERYKSLIEKLGLRR</sequence>
<keyword id="KW-0687">Ribonucleoprotein</keyword>
<keyword id="KW-0689">Ribosomal protein</keyword>
<keyword id="KW-0694">RNA-binding</keyword>
<keyword id="KW-0699">rRNA-binding</keyword>
<gene>
    <name evidence="1" type="primary">rpsO</name>
    <name type="ordered locus">xcc-b100_1652</name>
</gene>
<evidence type="ECO:0000255" key="1">
    <source>
        <dbReference type="HAMAP-Rule" id="MF_01343"/>
    </source>
</evidence>
<evidence type="ECO:0000256" key="2">
    <source>
        <dbReference type="SAM" id="MobiDB-lite"/>
    </source>
</evidence>
<evidence type="ECO:0000305" key="3"/>
<organism>
    <name type="scientific">Xanthomonas campestris pv. campestris (strain B100)</name>
    <dbReference type="NCBI Taxonomy" id="509169"/>
    <lineage>
        <taxon>Bacteria</taxon>
        <taxon>Pseudomonadati</taxon>
        <taxon>Pseudomonadota</taxon>
        <taxon>Gammaproteobacteria</taxon>
        <taxon>Lysobacterales</taxon>
        <taxon>Lysobacteraceae</taxon>
        <taxon>Xanthomonas</taxon>
    </lineage>
</organism>
<protein>
    <recommendedName>
        <fullName evidence="1">Small ribosomal subunit protein uS15</fullName>
    </recommendedName>
    <alternativeName>
        <fullName evidence="3">30S ribosomal protein S15</fullName>
    </alternativeName>
</protein>
<comment type="function">
    <text evidence="1">One of the primary rRNA binding proteins, it binds directly to 16S rRNA where it helps nucleate assembly of the platform of the 30S subunit by binding and bridging several RNA helices of the 16S rRNA.</text>
</comment>
<comment type="function">
    <text evidence="1">Forms an intersubunit bridge (bridge B4) with the 23S rRNA of the 50S subunit in the ribosome.</text>
</comment>
<comment type="subunit">
    <text evidence="1">Part of the 30S ribosomal subunit. Forms a bridge to the 50S subunit in the 70S ribosome, contacting the 23S rRNA.</text>
</comment>
<comment type="similarity">
    <text evidence="1">Belongs to the universal ribosomal protein uS15 family.</text>
</comment>
<name>RS15_XANCB</name>
<dbReference type="EMBL" id="AM920689">
    <property type="protein sequence ID" value="CAP51002.1"/>
    <property type="molecule type" value="Genomic_DNA"/>
</dbReference>
<dbReference type="SMR" id="B0RRB7"/>
<dbReference type="KEGG" id="xca:xcc-b100_1652"/>
<dbReference type="HOGENOM" id="CLU_148518_1_0_6"/>
<dbReference type="Proteomes" id="UP000001188">
    <property type="component" value="Chromosome"/>
</dbReference>
<dbReference type="GO" id="GO:0022627">
    <property type="term" value="C:cytosolic small ribosomal subunit"/>
    <property type="evidence" value="ECO:0007669"/>
    <property type="project" value="TreeGrafter"/>
</dbReference>
<dbReference type="GO" id="GO:0019843">
    <property type="term" value="F:rRNA binding"/>
    <property type="evidence" value="ECO:0007669"/>
    <property type="project" value="UniProtKB-UniRule"/>
</dbReference>
<dbReference type="GO" id="GO:0003735">
    <property type="term" value="F:structural constituent of ribosome"/>
    <property type="evidence" value="ECO:0007669"/>
    <property type="project" value="InterPro"/>
</dbReference>
<dbReference type="GO" id="GO:0006412">
    <property type="term" value="P:translation"/>
    <property type="evidence" value="ECO:0007669"/>
    <property type="project" value="UniProtKB-UniRule"/>
</dbReference>
<dbReference type="CDD" id="cd00353">
    <property type="entry name" value="Ribosomal_S15p_S13e"/>
    <property type="match status" value="1"/>
</dbReference>
<dbReference type="FunFam" id="1.10.287.10:FF:000002">
    <property type="entry name" value="30S ribosomal protein S15"/>
    <property type="match status" value="1"/>
</dbReference>
<dbReference type="Gene3D" id="6.10.250.3130">
    <property type="match status" value="1"/>
</dbReference>
<dbReference type="Gene3D" id="1.10.287.10">
    <property type="entry name" value="S15/NS1, RNA-binding"/>
    <property type="match status" value="1"/>
</dbReference>
<dbReference type="HAMAP" id="MF_01343_B">
    <property type="entry name" value="Ribosomal_uS15_B"/>
    <property type="match status" value="1"/>
</dbReference>
<dbReference type="InterPro" id="IPR000589">
    <property type="entry name" value="Ribosomal_uS15"/>
</dbReference>
<dbReference type="InterPro" id="IPR005290">
    <property type="entry name" value="Ribosomal_uS15_bac-type"/>
</dbReference>
<dbReference type="InterPro" id="IPR009068">
    <property type="entry name" value="uS15_NS1_RNA-bd_sf"/>
</dbReference>
<dbReference type="NCBIfam" id="TIGR00952">
    <property type="entry name" value="S15_bact"/>
    <property type="match status" value="1"/>
</dbReference>
<dbReference type="PANTHER" id="PTHR23321">
    <property type="entry name" value="RIBOSOMAL PROTEIN S15, BACTERIAL AND ORGANELLAR"/>
    <property type="match status" value="1"/>
</dbReference>
<dbReference type="PANTHER" id="PTHR23321:SF26">
    <property type="entry name" value="SMALL RIBOSOMAL SUBUNIT PROTEIN US15M"/>
    <property type="match status" value="1"/>
</dbReference>
<dbReference type="Pfam" id="PF00312">
    <property type="entry name" value="Ribosomal_S15"/>
    <property type="match status" value="1"/>
</dbReference>
<dbReference type="SMART" id="SM01387">
    <property type="entry name" value="Ribosomal_S15"/>
    <property type="match status" value="1"/>
</dbReference>
<dbReference type="SUPFAM" id="SSF47060">
    <property type="entry name" value="S15/NS1 RNA-binding domain"/>
    <property type="match status" value="1"/>
</dbReference>
<dbReference type="PROSITE" id="PS00362">
    <property type="entry name" value="RIBOSOMAL_S15"/>
    <property type="match status" value="1"/>
</dbReference>
<accession>B0RRB7</accession>
<reference key="1">
    <citation type="journal article" date="2008" name="J. Biotechnol.">
        <title>The genome of Xanthomonas campestris pv. campestris B100 and its use for the reconstruction of metabolic pathways involved in xanthan biosynthesis.</title>
        <authorList>
            <person name="Vorhoelter F.-J."/>
            <person name="Schneiker S."/>
            <person name="Goesmann A."/>
            <person name="Krause L."/>
            <person name="Bekel T."/>
            <person name="Kaiser O."/>
            <person name="Linke B."/>
            <person name="Patschkowski T."/>
            <person name="Rueckert C."/>
            <person name="Schmid J."/>
            <person name="Sidhu V.K."/>
            <person name="Sieber V."/>
            <person name="Tauch A."/>
            <person name="Watt S.A."/>
            <person name="Weisshaar B."/>
            <person name="Becker A."/>
            <person name="Niehaus K."/>
            <person name="Puehler A."/>
        </authorList>
    </citation>
    <scope>NUCLEOTIDE SEQUENCE [LARGE SCALE GENOMIC DNA]</scope>
    <source>
        <strain>B100</strain>
    </source>
</reference>
<proteinExistence type="inferred from homology"/>